<proteinExistence type="evidence at transcript level"/>
<feature type="chain" id="PRO_0000145619" description="Glyceraldehyde-3-phosphate dehydrogenase, cytosolic">
    <location>
        <begin position="1"/>
        <end position="340"/>
    </location>
</feature>
<feature type="active site" description="Nucleophile" evidence="2">
    <location>
        <position position="157"/>
    </location>
</feature>
<feature type="binding site" evidence="1">
    <location>
        <begin position="16"/>
        <end position="17"/>
    </location>
    <ligand>
        <name>NAD(+)</name>
        <dbReference type="ChEBI" id="CHEBI:57540"/>
    </ligand>
</feature>
<feature type="binding site" evidence="1">
    <location>
        <position position="38"/>
    </location>
    <ligand>
        <name>NAD(+)</name>
        <dbReference type="ChEBI" id="CHEBI:57540"/>
    </ligand>
</feature>
<feature type="binding site" evidence="1">
    <location>
        <position position="85"/>
    </location>
    <ligand>
        <name>NAD(+)</name>
        <dbReference type="ChEBI" id="CHEBI:57540"/>
    </ligand>
</feature>
<feature type="binding site" evidence="1">
    <location>
        <begin position="156"/>
        <end position="158"/>
    </location>
    <ligand>
        <name>D-glyceraldehyde 3-phosphate</name>
        <dbReference type="ChEBI" id="CHEBI:59776"/>
    </ligand>
</feature>
<feature type="binding site" evidence="1">
    <location>
        <position position="187"/>
    </location>
    <ligand>
        <name>D-glyceraldehyde 3-phosphate</name>
        <dbReference type="ChEBI" id="CHEBI:59776"/>
    </ligand>
</feature>
<feature type="binding site" evidence="1">
    <location>
        <begin position="216"/>
        <end position="217"/>
    </location>
    <ligand>
        <name>D-glyceraldehyde 3-phosphate</name>
        <dbReference type="ChEBI" id="CHEBI:59776"/>
    </ligand>
</feature>
<feature type="binding site" evidence="1">
    <location>
        <position position="239"/>
    </location>
    <ligand>
        <name>D-glyceraldehyde 3-phosphate</name>
        <dbReference type="ChEBI" id="CHEBI:59776"/>
    </ligand>
</feature>
<feature type="binding site" evidence="1">
    <location>
        <position position="321"/>
    </location>
    <ligand>
        <name>NAD(+)</name>
        <dbReference type="ChEBI" id="CHEBI:57540"/>
    </ligand>
</feature>
<feature type="site" description="Activates thiol group during catalysis" evidence="1">
    <location>
        <position position="184"/>
    </location>
</feature>
<protein>
    <recommendedName>
        <fullName>Glyceraldehyde-3-phosphate dehydrogenase, cytosolic</fullName>
        <ecNumber>1.2.1.12</ecNumber>
    </recommendedName>
</protein>
<evidence type="ECO:0000250" key="1"/>
<evidence type="ECO:0000255" key="2">
    <source>
        <dbReference type="PROSITE-ProRule" id="PRU10009"/>
    </source>
</evidence>
<evidence type="ECO:0000305" key="3"/>
<sequence>MGSTGKIKIGINGFGRIGRLVARVALQRDDIELVAVNDPFISTESLTSLFKYDSVHGQWKKHEVKVKDEKTLLFGEKHVAVFGCRNPEEIPWGEVGAEYVVESTGVFTDKDKAAAHLKGGAKKVVISAPSKDAPMFVVGVNEHEYKSDLTIVSNASCTTNCLAPLAKVINDRFGIVEGLMTTVHSITATQKTVDGPSNKDWRGGRAAGFNIIPSSTGAAKAVGKVLPVLNGKLTGMCFRVPTQDVSVVDLTVKLEKSATYGEIKAAIKEESEGKLKGILGYTEDDVVSTDFIGDSRSSIFDAKAGIALNDNFVKLVSWYDNEWGYSSRVIDLIVHMDSTA</sequence>
<keyword id="KW-0963">Cytoplasm</keyword>
<keyword id="KW-0324">Glycolysis</keyword>
<keyword id="KW-0520">NAD</keyword>
<keyword id="KW-0560">Oxidoreductase</keyword>
<accession>Q41595</accession>
<name>G3PC_TAXBA</name>
<comment type="function">
    <text evidence="1">Key enzyme in glycolysis that catalyzes the first step of the pathway by converting D-glyceraldehyde 3-phosphate (G3P) into 3-phospho-D-glyceroyl phosphate. Essential for the maintenance of cellular ATP levels and carbohydrate metabolism (By similarity).</text>
</comment>
<comment type="catalytic activity">
    <reaction evidence="2">
        <text>D-glyceraldehyde 3-phosphate + phosphate + NAD(+) = (2R)-3-phospho-glyceroyl phosphate + NADH + H(+)</text>
        <dbReference type="Rhea" id="RHEA:10300"/>
        <dbReference type="ChEBI" id="CHEBI:15378"/>
        <dbReference type="ChEBI" id="CHEBI:43474"/>
        <dbReference type="ChEBI" id="CHEBI:57540"/>
        <dbReference type="ChEBI" id="CHEBI:57604"/>
        <dbReference type="ChEBI" id="CHEBI:57945"/>
        <dbReference type="ChEBI" id="CHEBI:59776"/>
        <dbReference type="EC" id="1.2.1.12"/>
    </reaction>
</comment>
<comment type="pathway">
    <text>Carbohydrate degradation; glycolysis; pyruvate from D-glyceraldehyde 3-phosphate: step 1/5.</text>
</comment>
<comment type="subunit">
    <text evidence="1">Homotetramer.</text>
</comment>
<comment type="subcellular location">
    <subcellularLocation>
        <location evidence="1">Cytoplasm</location>
    </subcellularLocation>
</comment>
<comment type="miscellaneous">
    <text>Plants contain two types of GAPDH: cytosolic forms which participate in glycolysis and chloroplast forms which participate in photosynthesis. All the forms are encoded by distinct genes.</text>
</comment>
<comment type="similarity">
    <text evidence="3">Belongs to the glyceraldehyde-3-phosphate dehydrogenase family.</text>
</comment>
<dbReference type="EC" id="1.2.1.12"/>
<dbReference type="EMBL" id="L26922">
    <property type="protein sequence ID" value="AAA89207.1"/>
    <property type="molecule type" value="mRNA"/>
</dbReference>
<dbReference type="SMR" id="Q41595"/>
<dbReference type="UniPathway" id="UPA00109">
    <property type="reaction ID" value="UER00184"/>
</dbReference>
<dbReference type="GO" id="GO:0005829">
    <property type="term" value="C:cytosol"/>
    <property type="evidence" value="ECO:0007669"/>
    <property type="project" value="TreeGrafter"/>
</dbReference>
<dbReference type="GO" id="GO:0004365">
    <property type="term" value="F:glyceraldehyde-3-phosphate dehydrogenase (NAD+) (phosphorylating) activity"/>
    <property type="evidence" value="ECO:0007669"/>
    <property type="project" value="UniProtKB-EC"/>
</dbReference>
<dbReference type="GO" id="GO:0051287">
    <property type="term" value="F:NAD binding"/>
    <property type="evidence" value="ECO:0007669"/>
    <property type="project" value="InterPro"/>
</dbReference>
<dbReference type="GO" id="GO:0050661">
    <property type="term" value="F:NADP binding"/>
    <property type="evidence" value="ECO:0007669"/>
    <property type="project" value="InterPro"/>
</dbReference>
<dbReference type="GO" id="GO:0006006">
    <property type="term" value="P:glucose metabolic process"/>
    <property type="evidence" value="ECO:0007669"/>
    <property type="project" value="InterPro"/>
</dbReference>
<dbReference type="GO" id="GO:0006096">
    <property type="term" value="P:glycolytic process"/>
    <property type="evidence" value="ECO:0007669"/>
    <property type="project" value="UniProtKB-UniPathway"/>
</dbReference>
<dbReference type="CDD" id="cd18126">
    <property type="entry name" value="GAPDH_I_C"/>
    <property type="match status" value="1"/>
</dbReference>
<dbReference type="CDD" id="cd05214">
    <property type="entry name" value="GAPDH_I_N"/>
    <property type="match status" value="1"/>
</dbReference>
<dbReference type="FunFam" id="3.30.360.10:FF:000001">
    <property type="entry name" value="Glyceraldehyde-3-phosphate dehydrogenase"/>
    <property type="match status" value="1"/>
</dbReference>
<dbReference type="FunFam" id="3.40.50.720:FF:000020">
    <property type="entry name" value="Glyceraldehyde-3-phosphate dehydrogenase"/>
    <property type="match status" value="1"/>
</dbReference>
<dbReference type="Gene3D" id="3.30.360.10">
    <property type="entry name" value="Dihydrodipicolinate Reductase, domain 2"/>
    <property type="match status" value="1"/>
</dbReference>
<dbReference type="Gene3D" id="3.40.50.720">
    <property type="entry name" value="NAD(P)-binding Rossmann-like Domain"/>
    <property type="match status" value="1"/>
</dbReference>
<dbReference type="InterPro" id="IPR020831">
    <property type="entry name" value="GlycerAld/Erythrose_P_DH"/>
</dbReference>
<dbReference type="InterPro" id="IPR020830">
    <property type="entry name" value="GlycerAld_3-P_DH_AS"/>
</dbReference>
<dbReference type="InterPro" id="IPR020829">
    <property type="entry name" value="GlycerAld_3-P_DH_cat"/>
</dbReference>
<dbReference type="InterPro" id="IPR020828">
    <property type="entry name" value="GlycerAld_3-P_DH_NAD(P)-bd"/>
</dbReference>
<dbReference type="InterPro" id="IPR006424">
    <property type="entry name" value="Glyceraldehyde-3-P_DH_1"/>
</dbReference>
<dbReference type="InterPro" id="IPR036291">
    <property type="entry name" value="NAD(P)-bd_dom_sf"/>
</dbReference>
<dbReference type="NCBIfam" id="TIGR01534">
    <property type="entry name" value="GAPDH-I"/>
    <property type="match status" value="1"/>
</dbReference>
<dbReference type="PANTHER" id="PTHR10836">
    <property type="entry name" value="GLYCERALDEHYDE 3-PHOSPHATE DEHYDROGENASE"/>
    <property type="match status" value="1"/>
</dbReference>
<dbReference type="PANTHER" id="PTHR10836:SF112">
    <property type="entry name" value="GLYCERALDEHYDE-3-PHOSPHATE DEHYDROGENASE GAPC1, CYTOSOLIC-RELATED"/>
    <property type="match status" value="1"/>
</dbReference>
<dbReference type="Pfam" id="PF02800">
    <property type="entry name" value="Gp_dh_C"/>
    <property type="match status" value="1"/>
</dbReference>
<dbReference type="Pfam" id="PF00044">
    <property type="entry name" value="Gp_dh_N"/>
    <property type="match status" value="1"/>
</dbReference>
<dbReference type="PIRSF" id="PIRSF000149">
    <property type="entry name" value="GAP_DH"/>
    <property type="match status" value="1"/>
</dbReference>
<dbReference type="PRINTS" id="PR00078">
    <property type="entry name" value="G3PDHDRGNASE"/>
</dbReference>
<dbReference type="SMART" id="SM00846">
    <property type="entry name" value="Gp_dh_N"/>
    <property type="match status" value="1"/>
</dbReference>
<dbReference type="SUPFAM" id="SSF55347">
    <property type="entry name" value="Glyceraldehyde-3-phosphate dehydrogenase-like, C-terminal domain"/>
    <property type="match status" value="1"/>
</dbReference>
<dbReference type="SUPFAM" id="SSF51735">
    <property type="entry name" value="NAD(P)-binding Rossmann-fold domains"/>
    <property type="match status" value="1"/>
</dbReference>
<dbReference type="PROSITE" id="PS00071">
    <property type="entry name" value="GAPDH"/>
    <property type="match status" value="1"/>
</dbReference>
<reference key="1">
    <citation type="journal article" date="1994" name="J. Mol. Evol.">
        <title>Nucleotide distribution in gymnosperm nuclear sequences suggests a model for GC-content change in land-plant nuclear genomes.</title>
        <authorList>
            <person name="Jansson S."/>
            <person name="Meyer-Gauen G."/>
            <person name="Cerff R."/>
            <person name="Martin W."/>
        </authorList>
    </citation>
    <scope>NUCLEOTIDE SEQUENCE [MRNA]</scope>
    <source>
        <tissue>Seed</tissue>
    </source>
</reference>
<organism>
    <name type="scientific">Taxus baccata</name>
    <name type="common">English yew</name>
    <dbReference type="NCBI Taxonomy" id="25629"/>
    <lineage>
        <taxon>Eukaryota</taxon>
        <taxon>Viridiplantae</taxon>
        <taxon>Streptophyta</taxon>
        <taxon>Embryophyta</taxon>
        <taxon>Tracheophyta</taxon>
        <taxon>Spermatophyta</taxon>
        <taxon>Pinopsida</taxon>
        <taxon>Pinidae</taxon>
        <taxon>Conifers II</taxon>
        <taxon>Cupressales</taxon>
        <taxon>Taxaceae</taxon>
        <taxon>Taxus</taxon>
    </lineage>
</organism>